<comment type="function">
    <text evidence="1">Catalyzes the interconversion of L-alanine and D-alanine. May also act on other amino acids.</text>
</comment>
<comment type="catalytic activity">
    <reaction evidence="1">
        <text>L-alanine = D-alanine</text>
        <dbReference type="Rhea" id="RHEA:20249"/>
        <dbReference type="ChEBI" id="CHEBI:57416"/>
        <dbReference type="ChEBI" id="CHEBI:57972"/>
        <dbReference type="EC" id="5.1.1.1"/>
    </reaction>
</comment>
<comment type="cofactor">
    <cofactor evidence="1">
        <name>pyridoxal 5'-phosphate</name>
        <dbReference type="ChEBI" id="CHEBI:597326"/>
    </cofactor>
</comment>
<comment type="pathway">
    <text evidence="1">Amino-acid biosynthesis; D-alanine biosynthesis; D-alanine from L-alanine: step 1/1.</text>
</comment>
<comment type="similarity">
    <text evidence="1">Belongs to the alanine racemase family.</text>
</comment>
<reference key="1">
    <citation type="journal article" date="2006" name="Proc. Natl. Acad. Sci. U.S.A.">
        <title>Molecular genetic anatomy of inter- and intraserotype variation in the human bacterial pathogen group A Streptococcus.</title>
        <authorList>
            <person name="Beres S.B."/>
            <person name="Richter E.W."/>
            <person name="Nagiec M.J."/>
            <person name="Sumby P."/>
            <person name="Porcella S.F."/>
            <person name="DeLeo F.R."/>
            <person name="Musser J.M."/>
        </authorList>
    </citation>
    <scope>NUCLEOTIDE SEQUENCE [LARGE SCALE GENOMIC DNA]</scope>
    <source>
        <strain>MGAS2096</strain>
    </source>
</reference>
<feature type="chain" id="PRO_1000066046" description="Alanine racemase">
    <location>
        <begin position="1"/>
        <end position="366"/>
    </location>
</feature>
<feature type="active site" description="Proton acceptor; specific for D-alanine" evidence="1">
    <location>
        <position position="40"/>
    </location>
</feature>
<feature type="active site" description="Proton acceptor; specific for L-alanine" evidence="1">
    <location>
        <position position="263"/>
    </location>
</feature>
<feature type="binding site" evidence="1">
    <location>
        <position position="136"/>
    </location>
    <ligand>
        <name>substrate</name>
    </ligand>
</feature>
<feature type="binding site" evidence="1">
    <location>
        <position position="310"/>
    </location>
    <ligand>
        <name>substrate</name>
    </ligand>
</feature>
<feature type="modified residue" description="N6-(pyridoxal phosphate)lysine" evidence="1">
    <location>
        <position position="40"/>
    </location>
</feature>
<keyword id="KW-0413">Isomerase</keyword>
<keyword id="KW-0663">Pyridoxal phosphate</keyword>
<evidence type="ECO:0000255" key="1">
    <source>
        <dbReference type="HAMAP-Rule" id="MF_01201"/>
    </source>
</evidence>
<proteinExistence type="inferred from homology"/>
<protein>
    <recommendedName>
        <fullName evidence="1">Alanine racemase</fullName>
        <ecNumber evidence="1">5.1.1.1</ecNumber>
    </recommendedName>
</protein>
<dbReference type="EC" id="5.1.1.1" evidence="1"/>
<dbReference type="EMBL" id="CP000261">
    <property type="protein sequence ID" value="ABF36611.1"/>
    <property type="molecule type" value="Genomic_DNA"/>
</dbReference>
<dbReference type="SMR" id="Q1JA50"/>
<dbReference type="KEGG" id="spj:MGAS2096_Spy1559"/>
<dbReference type="HOGENOM" id="CLU_028393_2_1_9"/>
<dbReference type="UniPathway" id="UPA00042">
    <property type="reaction ID" value="UER00497"/>
</dbReference>
<dbReference type="GO" id="GO:0005829">
    <property type="term" value="C:cytosol"/>
    <property type="evidence" value="ECO:0007669"/>
    <property type="project" value="TreeGrafter"/>
</dbReference>
<dbReference type="GO" id="GO:0008784">
    <property type="term" value="F:alanine racemase activity"/>
    <property type="evidence" value="ECO:0007669"/>
    <property type="project" value="UniProtKB-UniRule"/>
</dbReference>
<dbReference type="GO" id="GO:0030170">
    <property type="term" value="F:pyridoxal phosphate binding"/>
    <property type="evidence" value="ECO:0007669"/>
    <property type="project" value="UniProtKB-UniRule"/>
</dbReference>
<dbReference type="GO" id="GO:0030632">
    <property type="term" value="P:D-alanine biosynthetic process"/>
    <property type="evidence" value="ECO:0007669"/>
    <property type="project" value="UniProtKB-UniRule"/>
</dbReference>
<dbReference type="GO" id="GO:0009252">
    <property type="term" value="P:peptidoglycan biosynthetic process"/>
    <property type="evidence" value="ECO:0007669"/>
    <property type="project" value="TreeGrafter"/>
</dbReference>
<dbReference type="CDD" id="cd00430">
    <property type="entry name" value="PLPDE_III_AR"/>
    <property type="match status" value="1"/>
</dbReference>
<dbReference type="FunFam" id="2.40.37.10:FF:000006">
    <property type="entry name" value="Alanine racemase"/>
    <property type="match status" value="1"/>
</dbReference>
<dbReference type="FunFam" id="3.20.20.10:FF:000002">
    <property type="entry name" value="Alanine racemase"/>
    <property type="match status" value="1"/>
</dbReference>
<dbReference type="Gene3D" id="3.20.20.10">
    <property type="entry name" value="Alanine racemase"/>
    <property type="match status" value="1"/>
</dbReference>
<dbReference type="Gene3D" id="2.40.37.10">
    <property type="entry name" value="Lyase, Ornithine Decarboxylase, Chain A, domain 1"/>
    <property type="match status" value="1"/>
</dbReference>
<dbReference type="HAMAP" id="MF_01201">
    <property type="entry name" value="Ala_racemase"/>
    <property type="match status" value="1"/>
</dbReference>
<dbReference type="InterPro" id="IPR000821">
    <property type="entry name" value="Ala_racemase"/>
</dbReference>
<dbReference type="InterPro" id="IPR009006">
    <property type="entry name" value="Ala_racemase/Decarboxylase_C"/>
</dbReference>
<dbReference type="InterPro" id="IPR011079">
    <property type="entry name" value="Ala_racemase_C"/>
</dbReference>
<dbReference type="InterPro" id="IPR001608">
    <property type="entry name" value="Ala_racemase_N"/>
</dbReference>
<dbReference type="InterPro" id="IPR020622">
    <property type="entry name" value="Ala_racemase_pyridoxalP-BS"/>
</dbReference>
<dbReference type="InterPro" id="IPR029066">
    <property type="entry name" value="PLP-binding_barrel"/>
</dbReference>
<dbReference type="NCBIfam" id="TIGR00492">
    <property type="entry name" value="alr"/>
    <property type="match status" value="1"/>
</dbReference>
<dbReference type="PANTHER" id="PTHR30511">
    <property type="entry name" value="ALANINE RACEMASE"/>
    <property type="match status" value="1"/>
</dbReference>
<dbReference type="PANTHER" id="PTHR30511:SF0">
    <property type="entry name" value="ALANINE RACEMASE, CATABOLIC-RELATED"/>
    <property type="match status" value="1"/>
</dbReference>
<dbReference type="Pfam" id="PF00842">
    <property type="entry name" value="Ala_racemase_C"/>
    <property type="match status" value="1"/>
</dbReference>
<dbReference type="Pfam" id="PF01168">
    <property type="entry name" value="Ala_racemase_N"/>
    <property type="match status" value="1"/>
</dbReference>
<dbReference type="PRINTS" id="PR00992">
    <property type="entry name" value="ALARACEMASE"/>
</dbReference>
<dbReference type="SMART" id="SM01005">
    <property type="entry name" value="Ala_racemase_C"/>
    <property type="match status" value="1"/>
</dbReference>
<dbReference type="SUPFAM" id="SSF50621">
    <property type="entry name" value="Alanine racemase C-terminal domain-like"/>
    <property type="match status" value="1"/>
</dbReference>
<dbReference type="SUPFAM" id="SSF51419">
    <property type="entry name" value="PLP-binding barrel"/>
    <property type="match status" value="1"/>
</dbReference>
<dbReference type="PROSITE" id="PS00395">
    <property type="entry name" value="ALANINE_RACEMASE"/>
    <property type="match status" value="1"/>
</dbReference>
<gene>
    <name type="primary">alr</name>
    <name type="ordered locus">MGAS2096_Spy1559</name>
</gene>
<sequence length="366" mass="39919">MISSFHRPTVARVNLQAIKENVASVQKHIPLGVKTYAVVKADAYGHGAVQVSKALLPQVDGYCVSNLDEALQLRQAGIDKEILILGVLLPNELELAVANAITVTIASLDWIALARLEKKECQGLKVHVKVDSGMGRIGLRSSKEVNLLIDSLKELGADVEGIFTHFATADEADDTKFNQQLQFFKKLIAGLEDKPRLVHASNSATSIWHSDTIFNAVRLGIVSYGLNPSGSDLSLPFPLQEALSLESSLVHVKMISAGDTVGYGVTYTAKKSEYVGTVPIGYADGWTRNMQGFSVLVDGQFCEIIGRVSMDQLTIRLSKAYPLGTKVTLIGSNQQKNISTTDIANYRNTINYEVLCLLSDRIPRIY</sequence>
<name>ALR_STRPB</name>
<organism>
    <name type="scientific">Streptococcus pyogenes serotype M12 (strain MGAS2096)</name>
    <dbReference type="NCBI Taxonomy" id="370553"/>
    <lineage>
        <taxon>Bacteria</taxon>
        <taxon>Bacillati</taxon>
        <taxon>Bacillota</taxon>
        <taxon>Bacilli</taxon>
        <taxon>Lactobacillales</taxon>
        <taxon>Streptococcaceae</taxon>
        <taxon>Streptococcus</taxon>
    </lineage>
</organism>
<accession>Q1JA50</accession>